<name>DNAK_CLONN</name>
<dbReference type="EMBL" id="CP000382">
    <property type="protein sequence ID" value="ABK62104.1"/>
    <property type="molecule type" value="Genomic_DNA"/>
</dbReference>
<dbReference type="RefSeq" id="WP_011722558.1">
    <property type="nucleotide sequence ID" value="NC_008593.1"/>
</dbReference>
<dbReference type="SMR" id="A0Q1R4"/>
<dbReference type="STRING" id="386415.NT01CX_0057"/>
<dbReference type="KEGG" id="cno:NT01CX_0057"/>
<dbReference type="eggNOG" id="COG0443">
    <property type="taxonomic scope" value="Bacteria"/>
</dbReference>
<dbReference type="HOGENOM" id="CLU_005965_2_4_9"/>
<dbReference type="Proteomes" id="UP000008220">
    <property type="component" value="Chromosome"/>
</dbReference>
<dbReference type="GO" id="GO:0005524">
    <property type="term" value="F:ATP binding"/>
    <property type="evidence" value="ECO:0007669"/>
    <property type="project" value="UniProtKB-UniRule"/>
</dbReference>
<dbReference type="GO" id="GO:0140662">
    <property type="term" value="F:ATP-dependent protein folding chaperone"/>
    <property type="evidence" value="ECO:0007669"/>
    <property type="project" value="InterPro"/>
</dbReference>
<dbReference type="GO" id="GO:0051082">
    <property type="term" value="F:unfolded protein binding"/>
    <property type="evidence" value="ECO:0007669"/>
    <property type="project" value="InterPro"/>
</dbReference>
<dbReference type="CDD" id="cd10234">
    <property type="entry name" value="ASKHA_NBD_HSP70_DnaK-like"/>
    <property type="match status" value="1"/>
</dbReference>
<dbReference type="FunFam" id="2.60.34.10:FF:000014">
    <property type="entry name" value="Chaperone protein DnaK HSP70"/>
    <property type="match status" value="1"/>
</dbReference>
<dbReference type="FunFam" id="1.20.1270.10:FF:000001">
    <property type="entry name" value="Molecular chaperone DnaK"/>
    <property type="match status" value="1"/>
</dbReference>
<dbReference type="FunFam" id="3.30.420.40:FF:000071">
    <property type="entry name" value="Molecular chaperone DnaK"/>
    <property type="match status" value="1"/>
</dbReference>
<dbReference type="FunFam" id="3.90.640.10:FF:000003">
    <property type="entry name" value="Molecular chaperone DnaK"/>
    <property type="match status" value="1"/>
</dbReference>
<dbReference type="Gene3D" id="1.20.1270.10">
    <property type="match status" value="1"/>
</dbReference>
<dbReference type="Gene3D" id="3.30.420.40">
    <property type="match status" value="2"/>
</dbReference>
<dbReference type="Gene3D" id="3.90.640.10">
    <property type="entry name" value="Actin, Chain A, domain 4"/>
    <property type="match status" value="1"/>
</dbReference>
<dbReference type="Gene3D" id="2.60.34.10">
    <property type="entry name" value="Substrate Binding Domain Of DNAk, Chain A, domain 1"/>
    <property type="match status" value="1"/>
</dbReference>
<dbReference type="HAMAP" id="MF_00332">
    <property type="entry name" value="DnaK"/>
    <property type="match status" value="1"/>
</dbReference>
<dbReference type="InterPro" id="IPR043129">
    <property type="entry name" value="ATPase_NBD"/>
</dbReference>
<dbReference type="InterPro" id="IPR012725">
    <property type="entry name" value="Chaperone_DnaK"/>
</dbReference>
<dbReference type="InterPro" id="IPR018181">
    <property type="entry name" value="Heat_shock_70_CS"/>
</dbReference>
<dbReference type="InterPro" id="IPR029048">
    <property type="entry name" value="HSP70_C_sf"/>
</dbReference>
<dbReference type="InterPro" id="IPR029047">
    <property type="entry name" value="HSP70_peptide-bd_sf"/>
</dbReference>
<dbReference type="InterPro" id="IPR013126">
    <property type="entry name" value="Hsp_70_fam"/>
</dbReference>
<dbReference type="NCBIfam" id="NF001413">
    <property type="entry name" value="PRK00290.1"/>
    <property type="match status" value="1"/>
</dbReference>
<dbReference type="NCBIfam" id="TIGR02350">
    <property type="entry name" value="prok_dnaK"/>
    <property type="match status" value="1"/>
</dbReference>
<dbReference type="PANTHER" id="PTHR19375">
    <property type="entry name" value="HEAT SHOCK PROTEIN 70KDA"/>
    <property type="match status" value="1"/>
</dbReference>
<dbReference type="Pfam" id="PF00012">
    <property type="entry name" value="HSP70"/>
    <property type="match status" value="1"/>
</dbReference>
<dbReference type="PRINTS" id="PR00301">
    <property type="entry name" value="HEATSHOCK70"/>
</dbReference>
<dbReference type="SUPFAM" id="SSF53067">
    <property type="entry name" value="Actin-like ATPase domain"/>
    <property type="match status" value="2"/>
</dbReference>
<dbReference type="SUPFAM" id="SSF100934">
    <property type="entry name" value="Heat shock protein 70kD (HSP70), C-terminal subdomain"/>
    <property type="match status" value="1"/>
</dbReference>
<dbReference type="SUPFAM" id="SSF100920">
    <property type="entry name" value="Heat shock protein 70kD (HSP70), peptide-binding domain"/>
    <property type="match status" value="1"/>
</dbReference>
<dbReference type="PROSITE" id="PS00297">
    <property type="entry name" value="HSP70_1"/>
    <property type="match status" value="1"/>
</dbReference>
<dbReference type="PROSITE" id="PS00329">
    <property type="entry name" value="HSP70_2"/>
    <property type="match status" value="1"/>
</dbReference>
<dbReference type="PROSITE" id="PS01036">
    <property type="entry name" value="HSP70_3"/>
    <property type="match status" value="1"/>
</dbReference>
<reference key="1">
    <citation type="journal article" date="2006" name="Nat. Biotechnol.">
        <title>The genome and transcriptomes of the anti-tumor agent Clostridium novyi-NT.</title>
        <authorList>
            <person name="Bettegowda C."/>
            <person name="Huang X."/>
            <person name="Lin J."/>
            <person name="Cheong I."/>
            <person name="Kohli M."/>
            <person name="Szabo S.A."/>
            <person name="Zhang X."/>
            <person name="Diaz L.A. Jr."/>
            <person name="Velculescu V.E."/>
            <person name="Parmigiani G."/>
            <person name="Kinzler K.W."/>
            <person name="Vogelstein B."/>
            <person name="Zhou S."/>
        </authorList>
    </citation>
    <scope>NUCLEOTIDE SEQUENCE [LARGE SCALE GENOMIC DNA]</scope>
    <source>
        <strain>NT</strain>
    </source>
</reference>
<comment type="function">
    <text evidence="1">Acts as a chaperone.</text>
</comment>
<comment type="induction">
    <text evidence="1">By stress conditions e.g. heat shock.</text>
</comment>
<comment type="similarity">
    <text evidence="1">Belongs to the heat shock protein 70 family.</text>
</comment>
<organism>
    <name type="scientific">Clostridium novyi (strain NT)</name>
    <dbReference type="NCBI Taxonomy" id="386415"/>
    <lineage>
        <taxon>Bacteria</taxon>
        <taxon>Bacillati</taxon>
        <taxon>Bacillota</taxon>
        <taxon>Clostridia</taxon>
        <taxon>Eubacteriales</taxon>
        <taxon>Clostridiaceae</taxon>
        <taxon>Clostridium</taxon>
    </lineage>
</organism>
<accession>A0Q1R4</accession>
<sequence>MGKIIGIDLGTTNSCVSVMEGGNPVVIPNAEGSRTTPSVVAFKEDGERLVGQVAKRQAITNPDKTIISIKRHMGTDYRVNVDGKDYSPEEISAMILQKLKADAEAYLGETVTEAVITVPAYFNDSERQATKNAGKIAGLDVKRIINEPTAASLAYGLDKMDKSHKIFVYDLGGGTFDVSILELGDGVFEVKATNGNTKLGGDDFDQKIMDYIAETFKAENGIDLRNDKMALQRLKEAAEKAKIELSSSTKTNINLPFITADATGPKHIDMDLTRAKFEELSADLVQATIEPMKKALADAELTINDIDKVVLVGGSTRIPAVQEAVQKFTGKEPSKGVNPDEVVAMGAAVQAGVLTGEVKDILLLDVTPLTLGIETMGGVATPLIERNTTIPTRKSQIFSTAADNQTSVDIHIVQGERKMAGDNKTLGRFQLSGIAPAPRGIPQIEVSFDIDANGILNVSAKDKGTGKEANITITASTNLSDDEIDKAVKEAEKFAAEDEKRKESVEVKNNADSALYQTEKALKDLGDKVEEADKKNVEEKLEALRQVKDGEDLEAIKKATTELTEEFYKVSSKLYQQAGAEAQQGAQGTQGADMGGNAQGKDDDNVVDADFKVEDDK</sequence>
<keyword id="KW-0067">ATP-binding</keyword>
<keyword id="KW-0143">Chaperone</keyword>
<keyword id="KW-0547">Nucleotide-binding</keyword>
<keyword id="KW-0597">Phosphoprotein</keyword>
<keyword id="KW-1185">Reference proteome</keyword>
<keyword id="KW-0346">Stress response</keyword>
<protein>
    <recommendedName>
        <fullName evidence="1">Chaperone protein DnaK</fullName>
    </recommendedName>
    <alternativeName>
        <fullName evidence="1">HSP70</fullName>
    </alternativeName>
    <alternativeName>
        <fullName evidence="1">Heat shock 70 kDa protein</fullName>
    </alternativeName>
    <alternativeName>
        <fullName evidence="1">Heat shock protein 70</fullName>
    </alternativeName>
</protein>
<feature type="chain" id="PRO_1000059543" description="Chaperone protein DnaK">
    <location>
        <begin position="1"/>
        <end position="617"/>
    </location>
</feature>
<feature type="region of interest" description="Disordered" evidence="2">
    <location>
        <begin position="578"/>
        <end position="617"/>
    </location>
</feature>
<feature type="compositionally biased region" description="Low complexity" evidence="2">
    <location>
        <begin position="578"/>
        <end position="592"/>
    </location>
</feature>
<feature type="compositionally biased region" description="Basic and acidic residues" evidence="2">
    <location>
        <begin position="600"/>
        <end position="617"/>
    </location>
</feature>
<feature type="modified residue" description="Phosphothreonine; by autocatalysis" evidence="1">
    <location>
        <position position="175"/>
    </location>
</feature>
<evidence type="ECO:0000255" key="1">
    <source>
        <dbReference type="HAMAP-Rule" id="MF_00332"/>
    </source>
</evidence>
<evidence type="ECO:0000256" key="2">
    <source>
        <dbReference type="SAM" id="MobiDB-lite"/>
    </source>
</evidence>
<gene>
    <name evidence="1" type="primary">dnaK</name>
    <name type="ordered locus">NT01CX_0057</name>
</gene>
<proteinExistence type="inferred from homology"/>